<name>NITR_PYRAB</name>
<accession>Q9UYV8</accession>
<comment type="function">
    <text evidence="3">Nitrilase that hydrolyzes preferentially aliphatic nitriles like malononitrile and fumaronitrile in vitro. These dinitriles are converted to the corresponding monoacid mononitriles, showing the enzyme is regioselective. Cannot hydrolyze compounds with a nitrile group bound to an aromatic ring or amino acid. Its biological role is unknown.</text>
</comment>
<comment type="catalytic activity">
    <reaction evidence="3">
        <text>a nitrile + 2 H2O = a carboxylate + NH4(+)</text>
        <dbReference type="Rhea" id="RHEA:21724"/>
        <dbReference type="ChEBI" id="CHEBI:15377"/>
        <dbReference type="ChEBI" id="CHEBI:18379"/>
        <dbReference type="ChEBI" id="CHEBI:28938"/>
        <dbReference type="ChEBI" id="CHEBI:29067"/>
        <dbReference type="EC" id="3.5.5.1"/>
    </reaction>
</comment>
<comment type="activity regulation">
    <text evidence="3">Enzymatic activity is inhibited in the presence of acetone, methanol and metal ions such as Ag(2+) and Hg(2+). Is also inhibited by various thiol reagents such as DTNB, p-chloromercuribenzoate, p-hydroxymercuribenzoate, iodacetamide and iodacetate. EDTA has no influence on activity.</text>
</comment>
<comment type="biophysicochemical properties">
    <kinetics>
        <KM evidence="3">3.47 mM for malononitrile</KM>
        <KM evidence="3">9.48 mM for fumaronitrile</KM>
    </kinetics>
    <phDependence>
        <text evidence="3">Optimum pH is 7.4. Active within the pH range of 4.5-8.5.</text>
    </phDependence>
    <temperatureDependence>
        <text evidence="3">Optimum temperature is 80 degrees Celsius. Active at a broad temperature range (60-90 degrees Celsius). Highly thermostable with a half-life of 25 hours at 70 degrees Celsius, 9 hours at 80 degrees Celsius, and 6 hours at 90 degrees Celsius. Shows a Tm of 112.7 degrees Celsius.</text>
    </temperatureDependence>
</comment>
<comment type="subunit">
    <text evidence="3 4">Homodimer.</text>
</comment>
<comment type="similarity">
    <text evidence="5">Belongs to the carbon-nitrogen hydrolase superfamily.</text>
</comment>
<proteinExistence type="evidence at protein level"/>
<gene>
    <name type="ordered locus">PYRAB13990</name>
    <name type="ORF">PAB1449</name>
</gene>
<keyword id="KW-0002">3D-structure</keyword>
<keyword id="KW-0378">Hydrolase</keyword>
<reference key="1">
    <citation type="journal article" date="2003" name="Mol. Microbiol.">
        <title>An integrated analysis of the genome of the hyperthermophilic archaeon Pyrococcus abyssi.</title>
        <authorList>
            <person name="Cohen G.N."/>
            <person name="Barbe V."/>
            <person name="Flament D."/>
            <person name="Galperin M."/>
            <person name="Heilig R."/>
            <person name="Lecompte O."/>
            <person name="Poch O."/>
            <person name="Prieur D."/>
            <person name="Querellou J."/>
            <person name="Ripp R."/>
            <person name="Thierry J.-C."/>
            <person name="Van der Oost J."/>
            <person name="Weissenbach J."/>
            <person name="Zivanovic Y."/>
            <person name="Forterre P."/>
        </authorList>
    </citation>
    <scope>NUCLEOTIDE SEQUENCE [LARGE SCALE GENOMIC DNA]</scope>
    <source>
        <strain>GE5 / Orsay</strain>
    </source>
</reference>
<reference key="2">
    <citation type="journal article" date="2012" name="Curr. Microbiol.">
        <title>Re-annotation of two hyperthermophilic archaea Pyrococcus abyssi GE5 and Pyrococcus furiosus DSM 3638.</title>
        <authorList>
            <person name="Gao J."/>
            <person name="Wang J."/>
        </authorList>
    </citation>
    <scope>GENOME REANNOTATION</scope>
    <source>
        <strain>GE5 / Orsay</strain>
    </source>
</reference>
<reference key="3">
    <citation type="journal article" date="2006" name="Protein Expr. Purif.">
        <title>Cloning, overexpression, and characterization of a thermoactive nitrilase from the hyperthermophilic archaeon Pyrococcus abyssi.</title>
        <authorList>
            <person name="Mueller P."/>
            <person name="Egorova K."/>
            <person name="Vorgias C.E."/>
            <person name="Boutou E."/>
            <person name="Trauthwein H."/>
            <person name="Verseck S."/>
            <person name="Antranikian G."/>
        </authorList>
    </citation>
    <scope>IDENTIFICATION</scope>
    <scope>FUNCTION</scope>
    <scope>CATALYTIC ACTIVITY</scope>
    <scope>BIOPHYSICOCHEMICAL PROPERTIES</scope>
    <scope>SUBSTRATE SPECIFICITY</scope>
    <scope>ACTIVITY REGULATION</scope>
    <scope>SUBUNIT</scope>
</reference>
<reference key="4">
    <citation type="journal article" date="2011" name="J. Struct. Biol.">
        <title>Crystallographic analysis of a thermoactive nitrilase.</title>
        <authorList>
            <person name="Raczynska J.E."/>
            <person name="Vorgias C.E."/>
            <person name="Antranikian G."/>
            <person name="Rypniewski W."/>
        </authorList>
    </citation>
    <scope>X-RAY CRYSTALLOGRAPHY (1.57 ANGSTROMS) OF APOENZYME AND IN COMPLEXES WITH ACETATE</scope>
    <scope>SUBUNIT</scope>
    <scope>DOCKING STUDIES</scope>
    <scope>REACTION MECHANISM</scope>
    <scope>ACTIVE SITES</scope>
    <source>
        <strain>GE5 / Orsay</strain>
    </source>
</reference>
<sequence length="262" mass="29798">MVKVAYVQMNPQILEPDKNYSKAEKLIKEASKQGAQLVVLPELFDTGYNFETREEVFEIAQKIPEGETTTFLMDVARDTGVYIVAGTAEKDGDVLYNSAVVVGPRGFIGKYRKIHLFYREKFFFEPGDLGFRVFDLGFMKVGVMICFDWFFPESARTLALKGADVIAHPANLVMPYAPRAMPIRALENKVYTVTADRVGEERGLKFIGKSLIASPKAEVLSMASETEEEVGVAEIDLYLVRNKRINDLNDIFKDRREEYYFR</sequence>
<evidence type="ECO:0000255" key="1"/>
<evidence type="ECO:0000255" key="2">
    <source>
        <dbReference type="PROSITE-ProRule" id="PRU00054"/>
    </source>
</evidence>
<evidence type="ECO:0000269" key="3">
    <source>
    </source>
</evidence>
<evidence type="ECO:0000269" key="4">
    <source>
    </source>
</evidence>
<evidence type="ECO:0000305" key="5"/>
<evidence type="ECO:0000305" key="6">
    <source>
    </source>
</evidence>
<evidence type="ECO:0007829" key="7">
    <source>
        <dbReference type="PDB" id="3IVZ"/>
    </source>
</evidence>
<organism>
    <name type="scientific">Pyrococcus abyssi (strain GE5 / Orsay)</name>
    <dbReference type="NCBI Taxonomy" id="272844"/>
    <lineage>
        <taxon>Archaea</taxon>
        <taxon>Methanobacteriati</taxon>
        <taxon>Methanobacteriota</taxon>
        <taxon>Thermococci</taxon>
        <taxon>Thermococcales</taxon>
        <taxon>Thermococcaceae</taxon>
        <taxon>Pyrococcus</taxon>
    </lineage>
</organism>
<protein>
    <recommendedName>
        <fullName>Nitrilase</fullName>
        <ecNumber>3.5.5.1</ecNumber>
    </recommendedName>
    <alternativeName>
        <fullName>PaNit</fullName>
    </alternativeName>
</protein>
<dbReference type="EC" id="3.5.5.1"/>
<dbReference type="EMBL" id="AJ248287">
    <property type="protein sequence ID" value="CAB50304.1"/>
    <property type="molecule type" value="Genomic_DNA"/>
</dbReference>
<dbReference type="EMBL" id="HE613800">
    <property type="protein sequence ID" value="CCE70842.1"/>
    <property type="molecule type" value="Genomic_DNA"/>
</dbReference>
<dbReference type="PIR" id="C75051">
    <property type="entry name" value="C75051"/>
</dbReference>
<dbReference type="RefSeq" id="WP_010868514.1">
    <property type="nucleotide sequence ID" value="NC_000868.1"/>
</dbReference>
<dbReference type="PDB" id="3IVZ">
    <property type="method" value="X-ray"/>
    <property type="resolution" value="1.57 A"/>
    <property type="chains" value="A/B=1-262"/>
</dbReference>
<dbReference type="PDB" id="3IW3">
    <property type="method" value="X-ray"/>
    <property type="resolution" value="1.80 A"/>
    <property type="chains" value="A/B=1-262"/>
</dbReference>
<dbReference type="PDB" id="3KI8">
    <property type="method" value="X-ray"/>
    <property type="resolution" value="1.60 A"/>
    <property type="chains" value="A/B=1-262"/>
</dbReference>
<dbReference type="PDB" id="3KLC">
    <property type="method" value="X-ray"/>
    <property type="resolution" value="1.76 A"/>
    <property type="chains" value="A/B=1-262"/>
</dbReference>
<dbReference type="PDBsum" id="3IVZ"/>
<dbReference type="PDBsum" id="3IW3"/>
<dbReference type="PDBsum" id="3KI8"/>
<dbReference type="PDBsum" id="3KLC"/>
<dbReference type="SMR" id="Q9UYV8"/>
<dbReference type="STRING" id="272844.PAB1449"/>
<dbReference type="KEGG" id="pab:PAB1449"/>
<dbReference type="PATRIC" id="fig|272844.11.peg.1486"/>
<dbReference type="eggNOG" id="arCOG00062">
    <property type="taxonomic scope" value="Archaea"/>
</dbReference>
<dbReference type="HOGENOM" id="CLU_030130_3_1_2"/>
<dbReference type="OrthoDB" id="39312at2157"/>
<dbReference type="PhylomeDB" id="Q9UYV8"/>
<dbReference type="EvolutionaryTrace" id="Q9UYV8"/>
<dbReference type="Proteomes" id="UP000000810">
    <property type="component" value="Chromosome"/>
</dbReference>
<dbReference type="Proteomes" id="UP000009139">
    <property type="component" value="Chromosome"/>
</dbReference>
<dbReference type="GO" id="GO:0016811">
    <property type="term" value="F:hydrolase activity, acting on carbon-nitrogen (but not peptide) bonds, in linear amides"/>
    <property type="evidence" value="ECO:0007669"/>
    <property type="project" value="UniProtKB-ARBA"/>
</dbReference>
<dbReference type="GO" id="GO:0000257">
    <property type="term" value="F:nitrilase activity"/>
    <property type="evidence" value="ECO:0007669"/>
    <property type="project" value="UniProtKB-EC"/>
</dbReference>
<dbReference type="CDD" id="cd07577">
    <property type="entry name" value="Ph0642_like"/>
    <property type="match status" value="1"/>
</dbReference>
<dbReference type="Gene3D" id="3.60.110.10">
    <property type="entry name" value="Carbon-nitrogen hydrolase"/>
    <property type="match status" value="1"/>
</dbReference>
<dbReference type="InterPro" id="IPR050345">
    <property type="entry name" value="Aliph_Amidase/BUP"/>
</dbReference>
<dbReference type="InterPro" id="IPR053613">
    <property type="entry name" value="Aliphatic_Nitrilase"/>
</dbReference>
<dbReference type="InterPro" id="IPR003010">
    <property type="entry name" value="C-N_Hydrolase"/>
</dbReference>
<dbReference type="InterPro" id="IPR036526">
    <property type="entry name" value="C-N_Hydrolase_sf"/>
</dbReference>
<dbReference type="NCBIfam" id="NF040852">
    <property type="entry name" value="nitrile_Arch"/>
    <property type="match status" value="1"/>
</dbReference>
<dbReference type="PANTHER" id="PTHR43674:SF2">
    <property type="entry name" value="BETA-UREIDOPROPIONASE"/>
    <property type="match status" value="1"/>
</dbReference>
<dbReference type="PANTHER" id="PTHR43674">
    <property type="entry name" value="NITRILASE C965.09-RELATED"/>
    <property type="match status" value="1"/>
</dbReference>
<dbReference type="Pfam" id="PF00795">
    <property type="entry name" value="CN_hydrolase"/>
    <property type="match status" value="1"/>
</dbReference>
<dbReference type="SUPFAM" id="SSF56317">
    <property type="entry name" value="Carbon-nitrogen hydrolase"/>
    <property type="match status" value="1"/>
</dbReference>
<dbReference type="PROSITE" id="PS50263">
    <property type="entry name" value="CN_HYDROLASE"/>
    <property type="match status" value="1"/>
</dbReference>
<feature type="chain" id="PRO_0000429328" description="Nitrilase">
    <location>
        <begin position="1"/>
        <end position="262"/>
    </location>
</feature>
<feature type="domain" description="CN hydrolase" evidence="2">
    <location>
        <begin position="2"/>
        <end position="237"/>
    </location>
</feature>
<feature type="active site" description="Proton acceptor" evidence="6">
    <location>
        <position position="42"/>
    </location>
</feature>
<feature type="active site" description="Proton donor" evidence="6">
    <location>
        <position position="113"/>
    </location>
</feature>
<feature type="active site" description="Nucleophile" evidence="2 4">
    <location>
        <position position="146"/>
    </location>
</feature>
<feature type="binding site" evidence="1">
    <location>
        <begin position="173"/>
        <end position="174"/>
    </location>
    <ligand>
        <name>substrate</name>
    </ligand>
</feature>
<feature type="strand" evidence="7">
    <location>
        <begin position="3"/>
        <end position="8"/>
    </location>
</feature>
<feature type="helix" evidence="7">
    <location>
        <begin position="16"/>
        <end position="32"/>
    </location>
</feature>
<feature type="strand" evidence="7">
    <location>
        <begin position="36"/>
        <end position="39"/>
    </location>
</feature>
<feature type="turn" evidence="7">
    <location>
        <begin position="42"/>
        <end position="46"/>
    </location>
</feature>
<feature type="helix" evidence="7">
    <location>
        <begin position="53"/>
        <end position="59"/>
    </location>
</feature>
<feature type="turn" evidence="7">
    <location>
        <begin position="63"/>
        <end position="65"/>
    </location>
</feature>
<feature type="helix" evidence="7">
    <location>
        <begin position="67"/>
        <end position="79"/>
    </location>
</feature>
<feature type="strand" evidence="7">
    <location>
        <begin position="82"/>
        <end position="91"/>
    </location>
</feature>
<feature type="strand" evidence="7">
    <location>
        <begin position="94"/>
        <end position="103"/>
    </location>
</feature>
<feature type="strand" evidence="7">
    <location>
        <begin position="106"/>
        <end position="112"/>
    </location>
</feature>
<feature type="helix" evidence="7">
    <location>
        <begin position="118"/>
        <end position="122"/>
    </location>
</feature>
<feature type="strand" evidence="7">
    <location>
        <begin position="133"/>
        <end position="135"/>
    </location>
</feature>
<feature type="strand" evidence="7">
    <location>
        <begin position="140"/>
        <end position="143"/>
    </location>
</feature>
<feature type="helix" evidence="7">
    <location>
        <begin position="146"/>
        <end position="150"/>
    </location>
</feature>
<feature type="helix" evidence="7">
    <location>
        <begin position="152"/>
        <end position="160"/>
    </location>
</feature>
<feature type="strand" evidence="7">
    <location>
        <begin position="164"/>
        <end position="170"/>
    </location>
</feature>
<feature type="helix" evidence="7">
    <location>
        <begin position="177"/>
        <end position="188"/>
    </location>
</feature>
<feature type="strand" evidence="7">
    <location>
        <begin position="191"/>
        <end position="196"/>
    </location>
</feature>
<feature type="strand" evidence="7">
    <location>
        <begin position="199"/>
        <end position="201"/>
    </location>
</feature>
<feature type="strand" evidence="7">
    <location>
        <begin position="211"/>
        <end position="213"/>
    </location>
</feature>
<feature type="strand" evidence="7">
    <location>
        <begin position="219"/>
        <end position="222"/>
    </location>
</feature>
<feature type="strand" evidence="7">
    <location>
        <begin position="229"/>
        <end position="234"/>
    </location>
</feature>
<feature type="helix" evidence="7">
    <location>
        <begin position="237"/>
        <end position="241"/>
    </location>
</feature>
<feature type="strand" evidence="7">
    <location>
        <begin position="244"/>
        <end position="246"/>
    </location>
</feature>
<feature type="helix" evidence="7">
    <location>
        <begin position="251"/>
        <end position="254"/>
    </location>
</feature>
<feature type="helix" evidence="7">
    <location>
        <begin position="257"/>
        <end position="259"/>
    </location>
</feature>